<proteinExistence type="inferred from homology"/>
<accession>Q9A7N5</accession>
<dbReference type="EC" id="2.1.1.182" evidence="1"/>
<dbReference type="EMBL" id="AE005673">
    <property type="protein sequence ID" value="AAK23663.1"/>
    <property type="molecule type" value="Genomic_DNA"/>
</dbReference>
<dbReference type="PIR" id="C87458">
    <property type="entry name" value="C87458"/>
</dbReference>
<dbReference type="RefSeq" id="NP_420495.1">
    <property type="nucleotide sequence ID" value="NC_002696.2"/>
</dbReference>
<dbReference type="SMR" id="Q9A7N5"/>
<dbReference type="STRING" id="190650.CC_1685"/>
<dbReference type="EnsemblBacteria" id="AAK23663">
    <property type="protein sequence ID" value="AAK23663"/>
    <property type="gene ID" value="CC_1685"/>
</dbReference>
<dbReference type="KEGG" id="ccr:CC_1685"/>
<dbReference type="PATRIC" id="fig|190650.5.peg.1714"/>
<dbReference type="eggNOG" id="COG0030">
    <property type="taxonomic scope" value="Bacteria"/>
</dbReference>
<dbReference type="HOGENOM" id="CLU_041220_0_1_5"/>
<dbReference type="BioCyc" id="CAULO:CC1685-MONOMER"/>
<dbReference type="Proteomes" id="UP000001816">
    <property type="component" value="Chromosome"/>
</dbReference>
<dbReference type="GO" id="GO:0005829">
    <property type="term" value="C:cytosol"/>
    <property type="evidence" value="ECO:0007669"/>
    <property type="project" value="TreeGrafter"/>
</dbReference>
<dbReference type="GO" id="GO:0052908">
    <property type="term" value="F:16S rRNA (adenine(1518)-N(6)/adenine(1519)-N(6))-dimethyltransferase activity"/>
    <property type="evidence" value="ECO:0007669"/>
    <property type="project" value="UniProtKB-EC"/>
</dbReference>
<dbReference type="GO" id="GO:0003723">
    <property type="term" value="F:RNA binding"/>
    <property type="evidence" value="ECO:0007669"/>
    <property type="project" value="UniProtKB-KW"/>
</dbReference>
<dbReference type="CDD" id="cd02440">
    <property type="entry name" value="AdoMet_MTases"/>
    <property type="match status" value="1"/>
</dbReference>
<dbReference type="Gene3D" id="1.10.8.100">
    <property type="entry name" value="Ribosomal RNA adenine dimethylase-like, domain 2"/>
    <property type="match status" value="1"/>
</dbReference>
<dbReference type="Gene3D" id="3.40.50.150">
    <property type="entry name" value="Vaccinia Virus protein VP39"/>
    <property type="match status" value="1"/>
</dbReference>
<dbReference type="HAMAP" id="MF_00607">
    <property type="entry name" value="16SrRNA_methyltr_A"/>
    <property type="match status" value="1"/>
</dbReference>
<dbReference type="InterPro" id="IPR001737">
    <property type="entry name" value="KsgA/Erm"/>
</dbReference>
<dbReference type="InterPro" id="IPR023165">
    <property type="entry name" value="rRNA_Ade_diMease-like_C"/>
</dbReference>
<dbReference type="InterPro" id="IPR020596">
    <property type="entry name" value="rRNA_Ade_Mease_Trfase_CS"/>
</dbReference>
<dbReference type="InterPro" id="IPR020598">
    <property type="entry name" value="rRNA_Ade_methylase_Trfase_N"/>
</dbReference>
<dbReference type="InterPro" id="IPR011530">
    <property type="entry name" value="rRNA_adenine_dimethylase"/>
</dbReference>
<dbReference type="InterPro" id="IPR029063">
    <property type="entry name" value="SAM-dependent_MTases_sf"/>
</dbReference>
<dbReference type="NCBIfam" id="TIGR00755">
    <property type="entry name" value="ksgA"/>
    <property type="match status" value="1"/>
</dbReference>
<dbReference type="PANTHER" id="PTHR11727">
    <property type="entry name" value="DIMETHYLADENOSINE TRANSFERASE"/>
    <property type="match status" value="1"/>
</dbReference>
<dbReference type="PANTHER" id="PTHR11727:SF7">
    <property type="entry name" value="DIMETHYLADENOSINE TRANSFERASE-RELATED"/>
    <property type="match status" value="1"/>
</dbReference>
<dbReference type="Pfam" id="PF00398">
    <property type="entry name" value="RrnaAD"/>
    <property type="match status" value="1"/>
</dbReference>
<dbReference type="SMART" id="SM00650">
    <property type="entry name" value="rADc"/>
    <property type="match status" value="1"/>
</dbReference>
<dbReference type="SUPFAM" id="SSF53335">
    <property type="entry name" value="S-adenosyl-L-methionine-dependent methyltransferases"/>
    <property type="match status" value="1"/>
</dbReference>
<dbReference type="PROSITE" id="PS01131">
    <property type="entry name" value="RRNA_A_DIMETH"/>
    <property type="match status" value="1"/>
</dbReference>
<dbReference type="PROSITE" id="PS51689">
    <property type="entry name" value="SAM_RNA_A_N6_MT"/>
    <property type="match status" value="1"/>
</dbReference>
<feature type="chain" id="PRO_0000101508" description="Ribosomal RNA small subunit methyltransferase A">
    <location>
        <begin position="1"/>
        <end position="258"/>
    </location>
</feature>
<feature type="binding site" evidence="1">
    <location>
        <position position="9"/>
    </location>
    <ligand>
        <name>S-adenosyl-L-methionine</name>
        <dbReference type="ChEBI" id="CHEBI:59789"/>
    </ligand>
</feature>
<feature type="binding site" evidence="1">
    <location>
        <position position="11"/>
    </location>
    <ligand>
        <name>S-adenosyl-L-methionine</name>
        <dbReference type="ChEBI" id="CHEBI:59789"/>
    </ligand>
</feature>
<feature type="binding site" evidence="1">
    <location>
        <position position="36"/>
    </location>
    <ligand>
        <name>S-adenosyl-L-methionine</name>
        <dbReference type="ChEBI" id="CHEBI:59789"/>
    </ligand>
</feature>
<feature type="binding site" evidence="1">
    <location>
        <position position="57"/>
    </location>
    <ligand>
        <name>S-adenosyl-L-methionine</name>
        <dbReference type="ChEBI" id="CHEBI:59789"/>
    </ligand>
</feature>
<feature type="binding site" evidence="1">
    <location>
        <position position="83"/>
    </location>
    <ligand>
        <name>S-adenosyl-L-methionine</name>
        <dbReference type="ChEBI" id="CHEBI:59789"/>
    </ligand>
</feature>
<feature type="binding site" evidence="1">
    <location>
        <position position="102"/>
    </location>
    <ligand>
        <name>S-adenosyl-L-methionine</name>
        <dbReference type="ChEBI" id="CHEBI:59789"/>
    </ligand>
</feature>
<evidence type="ECO:0000255" key="1">
    <source>
        <dbReference type="HAMAP-Rule" id="MF_00607"/>
    </source>
</evidence>
<reference key="1">
    <citation type="journal article" date="2001" name="Proc. Natl. Acad. Sci. U.S.A.">
        <title>Complete genome sequence of Caulobacter crescentus.</title>
        <authorList>
            <person name="Nierman W.C."/>
            <person name="Feldblyum T.V."/>
            <person name="Laub M.T."/>
            <person name="Paulsen I.T."/>
            <person name="Nelson K.E."/>
            <person name="Eisen J.A."/>
            <person name="Heidelberg J.F."/>
            <person name="Alley M.R.K."/>
            <person name="Ohta N."/>
            <person name="Maddock J.R."/>
            <person name="Potocka I."/>
            <person name="Nelson W.C."/>
            <person name="Newton A."/>
            <person name="Stephens C."/>
            <person name="Phadke N.D."/>
            <person name="Ely B."/>
            <person name="DeBoy R.T."/>
            <person name="Dodson R.J."/>
            <person name="Durkin A.S."/>
            <person name="Gwinn M.L."/>
            <person name="Haft D.H."/>
            <person name="Kolonay J.F."/>
            <person name="Smit J."/>
            <person name="Craven M.B."/>
            <person name="Khouri H.M."/>
            <person name="Shetty J."/>
            <person name="Berry K.J."/>
            <person name="Utterback T.R."/>
            <person name="Tran K."/>
            <person name="Wolf A.M."/>
            <person name="Vamathevan J.J."/>
            <person name="Ermolaeva M.D."/>
            <person name="White O."/>
            <person name="Salzberg S.L."/>
            <person name="Venter J.C."/>
            <person name="Shapiro L."/>
            <person name="Fraser C.M."/>
        </authorList>
    </citation>
    <scope>NUCLEOTIDE SEQUENCE [LARGE SCALE GENOMIC DNA]</scope>
    <source>
        <strain>ATCC 19089 / CIP 103742 / CB 15</strain>
    </source>
</reference>
<organism>
    <name type="scientific">Caulobacter vibrioides (strain ATCC 19089 / CIP 103742 / CB 15)</name>
    <name type="common">Caulobacter crescentus</name>
    <dbReference type="NCBI Taxonomy" id="190650"/>
    <lineage>
        <taxon>Bacteria</taxon>
        <taxon>Pseudomonadati</taxon>
        <taxon>Pseudomonadota</taxon>
        <taxon>Alphaproteobacteria</taxon>
        <taxon>Caulobacterales</taxon>
        <taxon>Caulobacteraceae</taxon>
        <taxon>Caulobacter</taxon>
    </lineage>
</organism>
<protein>
    <recommendedName>
        <fullName evidence="1">Ribosomal RNA small subunit methyltransferase A</fullName>
        <ecNumber evidence="1">2.1.1.182</ecNumber>
    </recommendedName>
    <alternativeName>
        <fullName evidence="1">16S rRNA (adenine(1518)-N(6)/adenine(1519)-N(6))-dimethyltransferase</fullName>
    </alternativeName>
    <alternativeName>
        <fullName evidence="1">16S rRNA dimethyladenosine transferase</fullName>
    </alternativeName>
    <alternativeName>
        <fullName evidence="1">16S rRNA dimethylase</fullName>
    </alternativeName>
    <alternativeName>
        <fullName evidence="1">S-adenosylmethionine-6-N', N'-adenosyl(rRNA) dimethyltransferase</fullName>
    </alternativeName>
</protein>
<gene>
    <name evidence="1" type="primary">rsmA</name>
    <name evidence="1" type="synonym">ksgA</name>
    <name type="ordered locus">CC_1685</name>
</gene>
<name>RSMA_CAUVC</name>
<keyword id="KW-0963">Cytoplasm</keyword>
<keyword id="KW-0489">Methyltransferase</keyword>
<keyword id="KW-1185">Reference proteome</keyword>
<keyword id="KW-0694">RNA-binding</keyword>
<keyword id="KW-0698">rRNA processing</keyword>
<keyword id="KW-0949">S-adenosyl-L-methionine</keyword>
<keyword id="KW-0808">Transferase</keyword>
<comment type="function">
    <text evidence="1">Specifically dimethylates two adjacent adenosines (A1518 and A1519) in the loop of a conserved hairpin near the 3'-end of 16S rRNA in the 30S particle. May play a critical role in biogenesis of 30S subunits.</text>
</comment>
<comment type="catalytic activity">
    <reaction evidence="1">
        <text>adenosine(1518)/adenosine(1519) in 16S rRNA + 4 S-adenosyl-L-methionine = N(6)-dimethyladenosine(1518)/N(6)-dimethyladenosine(1519) in 16S rRNA + 4 S-adenosyl-L-homocysteine + 4 H(+)</text>
        <dbReference type="Rhea" id="RHEA:19609"/>
        <dbReference type="Rhea" id="RHEA-COMP:10232"/>
        <dbReference type="Rhea" id="RHEA-COMP:10233"/>
        <dbReference type="ChEBI" id="CHEBI:15378"/>
        <dbReference type="ChEBI" id="CHEBI:57856"/>
        <dbReference type="ChEBI" id="CHEBI:59789"/>
        <dbReference type="ChEBI" id="CHEBI:74411"/>
        <dbReference type="ChEBI" id="CHEBI:74493"/>
        <dbReference type="EC" id="2.1.1.182"/>
    </reaction>
</comment>
<comment type="subcellular location">
    <subcellularLocation>
        <location evidence="1">Cytoplasm</location>
    </subcellularLocation>
</comment>
<comment type="similarity">
    <text evidence="1">Belongs to the class I-like SAM-binding methyltransferase superfamily. rRNA adenine N(6)-methyltransferase family. RsmA subfamily.</text>
</comment>
<sequence length="258" mass="27144">MARKSFGQHFLLDLNVTRKIARLAQVGEGDTVVEVGPGPGGLTRALLETGARVVAIEKDSRFLPLLAEVAEVAEGRLELVEGDALKVDAAQAAGGPAHVVSNLPYNVGTQLLINWLTGPFRPLSMTLMFQKEVADRIVAQPGDDAYGRLAVIAQTLCEARTVMDLPAKAFTPPPKVASAVVRLVPKAEPPPAEVVAALERVTAAAFGQRRKMLRSSLKALGGADLCERAGVSPDARAEVIDLAGFLDLARATLGGADQ</sequence>